<keyword id="KW-1003">Cell membrane</keyword>
<keyword id="KW-0963">Cytoplasm</keyword>
<keyword id="KW-0472">Membrane</keyword>
<keyword id="KW-1185">Reference proteome</keyword>
<keyword id="KW-0769">Symport</keyword>
<keyword id="KW-0812">Transmembrane</keyword>
<keyword id="KW-1133">Transmembrane helix</keyword>
<keyword id="KW-0813">Transport</keyword>
<reference key="1">
    <citation type="journal article" date="1998" name="Am. J. Physiol.">
        <title>Monocarboxylate transporter expression in mouse brain.</title>
        <authorList>
            <person name="Koehler-Stec E.M."/>
            <person name="Simpson I.A."/>
            <person name="Vannucci S.J."/>
            <person name="Landschulz K.T."/>
            <person name="Landschulz W.H."/>
        </authorList>
    </citation>
    <scope>NUCLEOTIDE SEQUENCE [MRNA]</scope>
    <source>
        <strain>129</strain>
        <tissue>Kidney</tissue>
    </source>
</reference>
<reference key="2">
    <citation type="journal article" date="2005" name="Science">
        <title>The transcriptional landscape of the mammalian genome.</title>
        <authorList>
            <person name="Carninci P."/>
            <person name="Kasukawa T."/>
            <person name="Katayama S."/>
            <person name="Gough J."/>
            <person name="Frith M.C."/>
            <person name="Maeda N."/>
            <person name="Oyama R."/>
            <person name="Ravasi T."/>
            <person name="Lenhard B."/>
            <person name="Wells C."/>
            <person name="Kodzius R."/>
            <person name="Shimokawa K."/>
            <person name="Bajic V.B."/>
            <person name="Brenner S.E."/>
            <person name="Batalov S."/>
            <person name="Forrest A.R."/>
            <person name="Zavolan M."/>
            <person name="Davis M.J."/>
            <person name="Wilming L.G."/>
            <person name="Aidinis V."/>
            <person name="Allen J.E."/>
            <person name="Ambesi-Impiombato A."/>
            <person name="Apweiler R."/>
            <person name="Aturaliya R.N."/>
            <person name="Bailey T.L."/>
            <person name="Bansal M."/>
            <person name="Baxter L."/>
            <person name="Beisel K.W."/>
            <person name="Bersano T."/>
            <person name="Bono H."/>
            <person name="Chalk A.M."/>
            <person name="Chiu K.P."/>
            <person name="Choudhary V."/>
            <person name="Christoffels A."/>
            <person name="Clutterbuck D.R."/>
            <person name="Crowe M.L."/>
            <person name="Dalla E."/>
            <person name="Dalrymple B.P."/>
            <person name="de Bono B."/>
            <person name="Della Gatta G."/>
            <person name="di Bernardo D."/>
            <person name="Down T."/>
            <person name="Engstrom P."/>
            <person name="Fagiolini M."/>
            <person name="Faulkner G."/>
            <person name="Fletcher C.F."/>
            <person name="Fukushima T."/>
            <person name="Furuno M."/>
            <person name="Futaki S."/>
            <person name="Gariboldi M."/>
            <person name="Georgii-Hemming P."/>
            <person name="Gingeras T.R."/>
            <person name="Gojobori T."/>
            <person name="Green R.E."/>
            <person name="Gustincich S."/>
            <person name="Harbers M."/>
            <person name="Hayashi Y."/>
            <person name="Hensch T.K."/>
            <person name="Hirokawa N."/>
            <person name="Hill D."/>
            <person name="Huminiecki L."/>
            <person name="Iacono M."/>
            <person name="Ikeo K."/>
            <person name="Iwama A."/>
            <person name="Ishikawa T."/>
            <person name="Jakt M."/>
            <person name="Kanapin A."/>
            <person name="Katoh M."/>
            <person name="Kawasawa Y."/>
            <person name="Kelso J."/>
            <person name="Kitamura H."/>
            <person name="Kitano H."/>
            <person name="Kollias G."/>
            <person name="Krishnan S.P."/>
            <person name="Kruger A."/>
            <person name="Kummerfeld S.K."/>
            <person name="Kurochkin I.V."/>
            <person name="Lareau L.F."/>
            <person name="Lazarevic D."/>
            <person name="Lipovich L."/>
            <person name="Liu J."/>
            <person name="Liuni S."/>
            <person name="McWilliam S."/>
            <person name="Madan Babu M."/>
            <person name="Madera M."/>
            <person name="Marchionni L."/>
            <person name="Matsuda H."/>
            <person name="Matsuzawa S."/>
            <person name="Miki H."/>
            <person name="Mignone F."/>
            <person name="Miyake S."/>
            <person name="Morris K."/>
            <person name="Mottagui-Tabar S."/>
            <person name="Mulder N."/>
            <person name="Nakano N."/>
            <person name="Nakauchi H."/>
            <person name="Ng P."/>
            <person name="Nilsson R."/>
            <person name="Nishiguchi S."/>
            <person name="Nishikawa S."/>
            <person name="Nori F."/>
            <person name="Ohara O."/>
            <person name="Okazaki Y."/>
            <person name="Orlando V."/>
            <person name="Pang K.C."/>
            <person name="Pavan W.J."/>
            <person name="Pavesi G."/>
            <person name="Pesole G."/>
            <person name="Petrovsky N."/>
            <person name="Piazza S."/>
            <person name="Reed J."/>
            <person name="Reid J.F."/>
            <person name="Ring B.Z."/>
            <person name="Ringwald M."/>
            <person name="Rost B."/>
            <person name="Ruan Y."/>
            <person name="Salzberg S.L."/>
            <person name="Sandelin A."/>
            <person name="Schneider C."/>
            <person name="Schoenbach C."/>
            <person name="Sekiguchi K."/>
            <person name="Semple C.A."/>
            <person name="Seno S."/>
            <person name="Sessa L."/>
            <person name="Sheng Y."/>
            <person name="Shibata Y."/>
            <person name="Shimada H."/>
            <person name="Shimada K."/>
            <person name="Silva D."/>
            <person name="Sinclair B."/>
            <person name="Sperling S."/>
            <person name="Stupka E."/>
            <person name="Sugiura K."/>
            <person name="Sultana R."/>
            <person name="Takenaka Y."/>
            <person name="Taki K."/>
            <person name="Tammoja K."/>
            <person name="Tan S.L."/>
            <person name="Tang S."/>
            <person name="Taylor M.S."/>
            <person name="Tegner J."/>
            <person name="Teichmann S.A."/>
            <person name="Ueda H.R."/>
            <person name="van Nimwegen E."/>
            <person name="Verardo R."/>
            <person name="Wei C.L."/>
            <person name="Yagi K."/>
            <person name="Yamanishi H."/>
            <person name="Zabarovsky E."/>
            <person name="Zhu S."/>
            <person name="Zimmer A."/>
            <person name="Hide W."/>
            <person name="Bult C."/>
            <person name="Grimmond S.M."/>
            <person name="Teasdale R.D."/>
            <person name="Liu E.T."/>
            <person name="Brusic V."/>
            <person name="Quackenbush J."/>
            <person name="Wahlestedt C."/>
            <person name="Mattick J.S."/>
            <person name="Hume D.A."/>
            <person name="Kai C."/>
            <person name="Sasaki D."/>
            <person name="Tomaru Y."/>
            <person name="Fukuda S."/>
            <person name="Kanamori-Katayama M."/>
            <person name="Suzuki M."/>
            <person name="Aoki J."/>
            <person name="Arakawa T."/>
            <person name="Iida J."/>
            <person name="Imamura K."/>
            <person name="Itoh M."/>
            <person name="Kato T."/>
            <person name="Kawaji H."/>
            <person name="Kawagashira N."/>
            <person name="Kawashima T."/>
            <person name="Kojima M."/>
            <person name="Kondo S."/>
            <person name="Konno H."/>
            <person name="Nakano K."/>
            <person name="Ninomiya N."/>
            <person name="Nishio T."/>
            <person name="Okada M."/>
            <person name="Plessy C."/>
            <person name="Shibata K."/>
            <person name="Shiraki T."/>
            <person name="Suzuki S."/>
            <person name="Tagami M."/>
            <person name="Waki K."/>
            <person name="Watahiki A."/>
            <person name="Okamura-Oho Y."/>
            <person name="Suzuki H."/>
            <person name="Kawai J."/>
            <person name="Hayashizaki Y."/>
        </authorList>
    </citation>
    <scope>NUCLEOTIDE SEQUENCE [LARGE SCALE MRNA]</scope>
    <source>
        <strain>C57BL/6J</strain>
        <tissue>Testis</tissue>
    </source>
</reference>
<reference key="3">
    <citation type="journal article" date="2007" name="NeuroReport">
        <title>The synaptic scaffolding protein Delphilin interacts with monocarboxylate transporter 2.</title>
        <authorList>
            <person name="Watanabe-Kaneko K."/>
            <person name="Sonoda T."/>
            <person name="Miyagi Y."/>
            <person name="Yamashita T."/>
            <person name="Okuda K."/>
            <person name="Kawamoto S."/>
        </authorList>
    </citation>
    <scope>INTERACTION WITH GRID2IP</scope>
</reference>
<reference key="4">
    <citation type="journal article" date="2012" name="J. Cell. Physiol.">
        <title>Basigin interacts with both MCT1 and MCT2 in murine spermatozoa.</title>
        <authorList>
            <person name="Mannowetz N."/>
            <person name="Wandernoth P."/>
            <person name="Wennemuth G."/>
        </authorList>
    </citation>
    <scope>INTERACTION WITH BSG</scope>
    <scope>TISSUE SPECIFICITY</scope>
    <scope>FUNCTION</scope>
    <scope>TRANSPORTER ACTIVITY</scope>
    <scope>SUBCELLULAR LOCATION</scope>
</reference>
<organism>
    <name type="scientific">Mus musculus</name>
    <name type="common">Mouse</name>
    <dbReference type="NCBI Taxonomy" id="10090"/>
    <lineage>
        <taxon>Eukaryota</taxon>
        <taxon>Metazoa</taxon>
        <taxon>Chordata</taxon>
        <taxon>Craniata</taxon>
        <taxon>Vertebrata</taxon>
        <taxon>Euteleostomi</taxon>
        <taxon>Mammalia</taxon>
        <taxon>Eutheria</taxon>
        <taxon>Euarchontoglires</taxon>
        <taxon>Glires</taxon>
        <taxon>Rodentia</taxon>
        <taxon>Myomorpha</taxon>
        <taxon>Muroidea</taxon>
        <taxon>Muridae</taxon>
        <taxon>Murinae</taxon>
        <taxon>Mus</taxon>
        <taxon>Mus</taxon>
    </lineage>
</organism>
<name>MOT2_MOUSE</name>
<evidence type="ECO:0000250" key="1">
    <source>
        <dbReference type="UniProtKB" id="O60669"/>
    </source>
</evidence>
<evidence type="ECO:0000250" key="2">
    <source>
        <dbReference type="UniProtKB" id="P53988"/>
    </source>
</evidence>
<evidence type="ECO:0000250" key="3">
    <source>
        <dbReference type="UniProtKB" id="Q63344"/>
    </source>
</evidence>
<evidence type="ECO:0000255" key="4"/>
<evidence type="ECO:0000256" key="5">
    <source>
        <dbReference type="SAM" id="MobiDB-lite"/>
    </source>
</evidence>
<evidence type="ECO:0000269" key="6">
    <source>
    </source>
</evidence>
<evidence type="ECO:0000269" key="7">
    <source>
    </source>
</evidence>
<evidence type="ECO:0000305" key="8"/>
<feature type="chain" id="PRO_0000211388" description="Monocarboxylate transporter 2">
    <location>
        <begin position="1"/>
        <end position="484"/>
    </location>
</feature>
<feature type="topological domain" description="Cytoplasmic" evidence="8">
    <location>
        <begin position="1"/>
        <end position="16"/>
    </location>
</feature>
<feature type="transmembrane region" description="Helical; Name=1" evidence="4">
    <location>
        <begin position="17"/>
        <end position="37"/>
    </location>
</feature>
<feature type="topological domain" description="Extracellular" evidence="8">
    <location>
        <begin position="38"/>
        <end position="60"/>
    </location>
</feature>
<feature type="transmembrane region" description="Helical; Name=2" evidence="4">
    <location>
        <begin position="61"/>
        <end position="81"/>
    </location>
</feature>
<feature type="topological domain" description="Cytoplasmic" evidence="8">
    <location>
        <begin position="82"/>
        <end position="90"/>
    </location>
</feature>
<feature type="transmembrane region" description="Helical; Name=3" evidence="4">
    <location>
        <begin position="91"/>
        <end position="111"/>
    </location>
</feature>
<feature type="topological domain" description="Extracellular" evidence="8">
    <location>
        <begin position="112"/>
        <end position="116"/>
    </location>
</feature>
<feature type="transmembrane region" description="Helical; Name=4" evidence="4">
    <location>
        <begin position="117"/>
        <end position="137"/>
    </location>
</feature>
<feature type="topological domain" description="Cytoplasmic" evidence="8">
    <location>
        <begin position="138"/>
        <end position="149"/>
    </location>
</feature>
<feature type="transmembrane region" description="Helical; Name=5" evidence="4">
    <location>
        <begin position="150"/>
        <end position="170"/>
    </location>
</feature>
<feature type="topological domain" description="Extracellular" evidence="8">
    <location>
        <begin position="171"/>
        <end position="174"/>
    </location>
</feature>
<feature type="transmembrane region" description="Helical; Name=6" evidence="4">
    <location>
        <begin position="175"/>
        <end position="195"/>
    </location>
</feature>
<feature type="topological domain" description="Cytoplasmic" evidence="8">
    <location>
        <begin position="196"/>
        <end position="245"/>
    </location>
</feature>
<feature type="transmembrane region" description="Helical; Name=7" evidence="4">
    <location>
        <begin position="246"/>
        <end position="266"/>
    </location>
</feature>
<feature type="topological domain" description="Extracellular" evidence="8">
    <location>
        <begin position="267"/>
        <end position="281"/>
    </location>
</feature>
<feature type="transmembrane region" description="Helical; Name=8" evidence="4">
    <location>
        <begin position="282"/>
        <end position="302"/>
    </location>
</feature>
<feature type="topological domain" description="Cytoplasmic" evidence="8">
    <location>
        <begin position="303"/>
        <end position="311"/>
    </location>
</feature>
<feature type="transmembrane region" description="Helical; Name=9" evidence="4">
    <location>
        <begin position="312"/>
        <end position="332"/>
    </location>
</feature>
<feature type="topological domain" description="Extracellular" evidence="8">
    <location>
        <begin position="333"/>
        <end position="337"/>
    </location>
</feature>
<feature type="transmembrane region" description="Helical; Name=10" evidence="4">
    <location>
        <begin position="338"/>
        <end position="358"/>
    </location>
</feature>
<feature type="topological domain" description="Cytoplasmic" evidence="8">
    <location>
        <begin position="359"/>
        <end position="372"/>
    </location>
</feature>
<feature type="transmembrane region" description="Helical; Name=11" evidence="4">
    <location>
        <begin position="373"/>
        <end position="393"/>
    </location>
</feature>
<feature type="topological domain" description="Extracellular" evidence="8">
    <location>
        <begin position="394"/>
        <end position="405"/>
    </location>
</feature>
<feature type="transmembrane region" description="Helical; Name=12" evidence="4">
    <location>
        <begin position="406"/>
        <end position="426"/>
    </location>
</feature>
<feature type="topological domain" description="Cytoplasmic" evidence="8">
    <location>
        <begin position="427"/>
        <end position="484"/>
    </location>
</feature>
<feature type="region of interest" description="Disordered" evidence="5">
    <location>
        <begin position="438"/>
        <end position="484"/>
    </location>
</feature>
<feature type="compositionally biased region" description="Basic and acidic residues" evidence="5">
    <location>
        <begin position="449"/>
        <end position="465"/>
    </location>
</feature>
<feature type="compositionally biased region" description="Basic and acidic residues" evidence="5">
    <location>
        <begin position="475"/>
        <end position="484"/>
    </location>
</feature>
<feature type="site" description="May be protonated during monocarboxylate transport" evidence="1">
    <location>
        <position position="292"/>
    </location>
</feature>
<dbReference type="EMBL" id="AF058054">
    <property type="protein sequence ID" value="AAC13719.1"/>
    <property type="molecule type" value="mRNA"/>
</dbReference>
<dbReference type="EMBL" id="AK076612">
    <property type="protein sequence ID" value="BAC36415.1"/>
    <property type="molecule type" value="mRNA"/>
</dbReference>
<dbReference type="CCDS" id="CCDS24218.1"/>
<dbReference type="RefSeq" id="NP_001345425.1">
    <property type="nucleotide sequence ID" value="NM_001358496.2"/>
</dbReference>
<dbReference type="RefSeq" id="NP_001345844.1">
    <property type="nucleotide sequence ID" value="NM_001358915.2"/>
</dbReference>
<dbReference type="RefSeq" id="NP_001415735.1">
    <property type="nucleotide sequence ID" value="NM_001428806.1"/>
</dbReference>
<dbReference type="RefSeq" id="NP_001415736.1">
    <property type="nucleotide sequence ID" value="NM_001428807.1"/>
</dbReference>
<dbReference type="RefSeq" id="NP_001415737.1">
    <property type="nucleotide sequence ID" value="NM_001428808.1"/>
</dbReference>
<dbReference type="RefSeq" id="NP_001415738.1">
    <property type="nucleotide sequence ID" value="NM_001428809.1"/>
</dbReference>
<dbReference type="RefSeq" id="NP_035521.1">
    <property type="nucleotide sequence ID" value="NM_011391.3"/>
</dbReference>
<dbReference type="RefSeq" id="XP_006513469.1">
    <property type="nucleotide sequence ID" value="XM_006513406.3"/>
</dbReference>
<dbReference type="RefSeq" id="XP_006513471.1">
    <property type="nucleotide sequence ID" value="XM_006513408.5"/>
</dbReference>
<dbReference type="RefSeq" id="XP_006513472.1">
    <property type="nucleotide sequence ID" value="XM_006513409.3"/>
</dbReference>
<dbReference type="RefSeq" id="XP_006513473.1">
    <property type="nucleotide sequence ID" value="XM_006513410.5"/>
</dbReference>
<dbReference type="RefSeq" id="XP_006513474.1">
    <property type="nucleotide sequence ID" value="XM_006513411.1"/>
</dbReference>
<dbReference type="RefSeq" id="XP_006513475.1">
    <property type="nucleotide sequence ID" value="XM_006513412.3"/>
</dbReference>
<dbReference type="RefSeq" id="XP_006513476.1">
    <property type="nucleotide sequence ID" value="XM_006513413.3"/>
</dbReference>
<dbReference type="RefSeq" id="XP_017169350.1">
    <property type="nucleotide sequence ID" value="XM_017313861.3"/>
</dbReference>
<dbReference type="RefSeq" id="XP_030100829.1">
    <property type="nucleotide sequence ID" value="XM_030244969.2"/>
</dbReference>
<dbReference type="RefSeq" id="XP_030100830.1">
    <property type="nucleotide sequence ID" value="XM_030244970.2"/>
</dbReference>
<dbReference type="SMR" id="O70451"/>
<dbReference type="BioGRID" id="203284">
    <property type="interactions" value="6"/>
</dbReference>
<dbReference type="FunCoup" id="O70451">
    <property type="interactions" value="75"/>
</dbReference>
<dbReference type="STRING" id="10090.ENSMUSP00000147968"/>
<dbReference type="iPTMnet" id="O70451"/>
<dbReference type="PhosphoSitePlus" id="O70451"/>
<dbReference type="SwissPalm" id="O70451"/>
<dbReference type="jPOST" id="O70451"/>
<dbReference type="PaxDb" id="10090-ENSMUSP00000065433"/>
<dbReference type="ProteomicsDB" id="252596"/>
<dbReference type="Antibodypedia" id="1576">
    <property type="antibodies" value="243 antibodies from 35 providers"/>
</dbReference>
<dbReference type="DNASU" id="20503"/>
<dbReference type="Ensembl" id="ENSMUST00000063318.10">
    <property type="protein sequence ID" value="ENSMUSP00000065433.3"/>
    <property type="gene ID" value="ENSMUSG00000020102.16"/>
</dbReference>
<dbReference type="Ensembl" id="ENSMUST00000105257.4">
    <property type="protein sequence ID" value="ENSMUSP00000100892.3"/>
    <property type="gene ID" value="ENSMUSG00000020102.16"/>
</dbReference>
<dbReference type="Ensembl" id="ENSMUST00000210780.2">
    <property type="protein sequence ID" value="ENSMUSP00000147560.2"/>
    <property type="gene ID" value="ENSMUSG00000020102.16"/>
</dbReference>
<dbReference type="Ensembl" id="ENSMUST00000211781.2">
    <property type="protein sequence ID" value="ENSMUSP00000147968.2"/>
    <property type="gene ID" value="ENSMUSG00000020102.16"/>
</dbReference>
<dbReference type="GeneID" id="20503"/>
<dbReference type="KEGG" id="mmu:20503"/>
<dbReference type="UCSC" id="uc007hgx.1">
    <property type="organism name" value="mouse"/>
</dbReference>
<dbReference type="AGR" id="MGI:1330284"/>
<dbReference type="CTD" id="9194"/>
<dbReference type="MGI" id="MGI:1330284">
    <property type="gene designation" value="Slc16a7"/>
</dbReference>
<dbReference type="VEuPathDB" id="HostDB:ENSMUSG00000020102"/>
<dbReference type="eggNOG" id="KOG2504">
    <property type="taxonomic scope" value="Eukaryota"/>
</dbReference>
<dbReference type="GeneTree" id="ENSGT00940000157309"/>
<dbReference type="HOGENOM" id="CLU_001265_59_1_1"/>
<dbReference type="InParanoid" id="O70451"/>
<dbReference type="OMA" id="IPARPIM"/>
<dbReference type="OrthoDB" id="6499973at2759"/>
<dbReference type="PhylomeDB" id="O70451"/>
<dbReference type="TreeFam" id="TF313792"/>
<dbReference type="Reactome" id="R-MMU-433692">
    <property type="pathway name" value="Proton-coupled monocarboxylate transport"/>
</dbReference>
<dbReference type="BioGRID-ORCS" id="20503">
    <property type="hits" value="1 hit in 77 CRISPR screens"/>
</dbReference>
<dbReference type="ChiTaRS" id="Slc16a7">
    <property type="organism name" value="mouse"/>
</dbReference>
<dbReference type="PRO" id="PR:O70451"/>
<dbReference type="Proteomes" id="UP000000589">
    <property type="component" value="Chromosome 10"/>
</dbReference>
<dbReference type="RNAct" id="O70451">
    <property type="molecule type" value="protein"/>
</dbReference>
<dbReference type="Bgee" id="ENSMUSG00000020102">
    <property type="expression patterns" value="Expressed in spermatid and 235 other cell types or tissues"/>
</dbReference>
<dbReference type="ExpressionAtlas" id="O70451">
    <property type="expression patterns" value="baseline and differential"/>
</dbReference>
<dbReference type="GO" id="GO:0016323">
    <property type="term" value="C:basolateral plasma membrane"/>
    <property type="evidence" value="ECO:0000250"/>
    <property type="project" value="UniProtKB"/>
</dbReference>
<dbReference type="GO" id="GO:0005829">
    <property type="term" value="C:cytosol"/>
    <property type="evidence" value="ECO:0007669"/>
    <property type="project" value="Ensembl"/>
</dbReference>
<dbReference type="GO" id="GO:0098978">
    <property type="term" value="C:glutamatergic synapse"/>
    <property type="evidence" value="ECO:0007669"/>
    <property type="project" value="Ensembl"/>
</dbReference>
<dbReference type="GO" id="GO:0098686">
    <property type="term" value="C:hippocampal mossy fiber to CA3 synapse"/>
    <property type="evidence" value="ECO:0007669"/>
    <property type="project" value="Ensembl"/>
</dbReference>
<dbReference type="GO" id="GO:0005654">
    <property type="term" value="C:nucleoplasm"/>
    <property type="evidence" value="ECO:0007669"/>
    <property type="project" value="Ensembl"/>
</dbReference>
<dbReference type="GO" id="GO:0098688">
    <property type="term" value="C:parallel fiber to Purkinje cell synapse"/>
    <property type="evidence" value="ECO:0007669"/>
    <property type="project" value="Ensembl"/>
</dbReference>
<dbReference type="GO" id="GO:0005886">
    <property type="term" value="C:plasma membrane"/>
    <property type="evidence" value="ECO:0000250"/>
    <property type="project" value="UniProtKB"/>
</dbReference>
<dbReference type="GO" id="GO:0098839">
    <property type="term" value="C:postsynaptic density membrane"/>
    <property type="evidence" value="ECO:0007669"/>
    <property type="project" value="Ensembl"/>
</dbReference>
<dbReference type="GO" id="GO:0098685">
    <property type="term" value="C:Schaffer collateral - CA1 synapse"/>
    <property type="evidence" value="ECO:0007669"/>
    <property type="project" value="Ensembl"/>
</dbReference>
<dbReference type="GO" id="GO:0042802">
    <property type="term" value="F:identical protein binding"/>
    <property type="evidence" value="ECO:0000250"/>
    <property type="project" value="UniProtKB"/>
</dbReference>
<dbReference type="GO" id="GO:0015129">
    <property type="term" value="F:lactate transmembrane transporter activity"/>
    <property type="evidence" value="ECO:0000250"/>
    <property type="project" value="UniProtKB"/>
</dbReference>
<dbReference type="GO" id="GO:0050833">
    <property type="term" value="F:pyruvate transmembrane transporter activity"/>
    <property type="evidence" value="ECO:0000250"/>
    <property type="project" value="UniProtKB"/>
</dbReference>
<dbReference type="GO" id="GO:0015293">
    <property type="term" value="F:symporter activity"/>
    <property type="evidence" value="ECO:0000314"/>
    <property type="project" value="UniProtKB"/>
</dbReference>
<dbReference type="GO" id="GO:0035873">
    <property type="term" value="P:lactate transmembrane transport"/>
    <property type="evidence" value="ECO:0000250"/>
    <property type="project" value="UniProtKB"/>
</dbReference>
<dbReference type="GO" id="GO:0035879">
    <property type="term" value="P:plasma membrane lactate transport"/>
    <property type="evidence" value="ECO:0007669"/>
    <property type="project" value="Ensembl"/>
</dbReference>
<dbReference type="GO" id="GO:1901475">
    <property type="term" value="P:pyruvate transmembrane transport"/>
    <property type="evidence" value="ECO:0000250"/>
    <property type="project" value="UniProtKB"/>
</dbReference>
<dbReference type="FunFam" id="1.20.1250.20:FF:000030">
    <property type="entry name" value="monocarboxylate transporter 1 isoform X1"/>
    <property type="match status" value="1"/>
</dbReference>
<dbReference type="Gene3D" id="1.20.1250.20">
    <property type="entry name" value="MFS general substrate transporter like domains"/>
    <property type="match status" value="1"/>
</dbReference>
<dbReference type="InterPro" id="IPR004743">
    <property type="entry name" value="MCT"/>
</dbReference>
<dbReference type="InterPro" id="IPR011701">
    <property type="entry name" value="MFS"/>
</dbReference>
<dbReference type="InterPro" id="IPR020846">
    <property type="entry name" value="MFS_dom"/>
</dbReference>
<dbReference type="InterPro" id="IPR036259">
    <property type="entry name" value="MFS_trans_sf"/>
</dbReference>
<dbReference type="InterPro" id="IPR050327">
    <property type="entry name" value="Proton-linked_MCT"/>
</dbReference>
<dbReference type="NCBIfam" id="TIGR00892">
    <property type="entry name" value="2A0113"/>
    <property type="match status" value="1"/>
</dbReference>
<dbReference type="PANTHER" id="PTHR11360">
    <property type="entry name" value="MONOCARBOXYLATE TRANSPORTER"/>
    <property type="match status" value="1"/>
</dbReference>
<dbReference type="PANTHER" id="PTHR11360:SF25">
    <property type="entry name" value="MONOCARBOXYLATE TRANSPORTER 2"/>
    <property type="match status" value="1"/>
</dbReference>
<dbReference type="Pfam" id="PF07690">
    <property type="entry name" value="MFS_1"/>
    <property type="match status" value="1"/>
</dbReference>
<dbReference type="SUPFAM" id="SSF103473">
    <property type="entry name" value="MFS general substrate transporter"/>
    <property type="match status" value="1"/>
</dbReference>
<dbReference type="PROSITE" id="PS50850">
    <property type="entry name" value="MFS"/>
    <property type="match status" value="1"/>
</dbReference>
<accession>O70451</accession>
<comment type="function">
    <text evidence="1 7">Proton-coupled monocarboxylate symporter (PubMed:21792931). Catalyzes the rapid transport across the plasma membrane of monocarboxylates such as L-lactate, pyruvate and ketone bodies, acetoacetate, beta-hydroxybutyrate and acetate. Dimerization is functionally required and both subunits work cooperatively in transporting substrate (By similarity).</text>
</comment>
<comment type="catalytic activity">
    <reaction evidence="7">
        <text>(S)-lactate(in) + H(+)(in) = (S)-lactate(out) + H(+)(out)</text>
        <dbReference type="Rhea" id="RHEA:29415"/>
        <dbReference type="ChEBI" id="CHEBI:15378"/>
        <dbReference type="ChEBI" id="CHEBI:16651"/>
    </reaction>
</comment>
<comment type="catalytic activity">
    <reaction evidence="3">
        <text>3-methyl-2-oxobutanoate(out) + H(+)(out) = 3-methyl-2-oxobutanoate(in) + H(+)(in)</text>
        <dbReference type="Rhea" id="RHEA:71783"/>
        <dbReference type="ChEBI" id="CHEBI:11851"/>
        <dbReference type="ChEBI" id="CHEBI:15378"/>
    </reaction>
</comment>
<comment type="catalytic activity">
    <reaction evidence="3">
        <text>acetoacetate(out) + H(+)(out) = acetoacetate(in) + H(+)(in)</text>
        <dbReference type="Rhea" id="RHEA:71775"/>
        <dbReference type="ChEBI" id="CHEBI:13705"/>
        <dbReference type="ChEBI" id="CHEBI:15378"/>
    </reaction>
</comment>
<comment type="catalytic activity">
    <reaction evidence="3">
        <text>(R)-3-hydroxybutanoate(out) + H(+)(out) = (R)-3-hydroxybutanoate(in) + H(+)(in)</text>
        <dbReference type="Rhea" id="RHEA:71795"/>
        <dbReference type="ChEBI" id="CHEBI:10983"/>
        <dbReference type="ChEBI" id="CHEBI:15378"/>
    </reaction>
</comment>
<comment type="catalytic activity">
    <reaction evidence="3">
        <text>4-methyl-2-oxopentanoate(out) + H(+)(out) = 4-methyl-2-oxopentanoate(in) + H(+)(in)</text>
        <dbReference type="Rhea" id="RHEA:71779"/>
        <dbReference type="ChEBI" id="CHEBI:15378"/>
        <dbReference type="ChEBI" id="CHEBI:17865"/>
    </reaction>
</comment>
<comment type="catalytic activity">
    <reaction evidence="3">
        <text>pyruvate(out) + H(+)(out) = pyruvate(in) + H(+)(in)</text>
        <dbReference type="Rhea" id="RHEA:64720"/>
        <dbReference type="ChEBI" id="CHEBI:15361"/>
        <dbReference type="ChEBI" id="CHEBI:15378"/>
    </reaction>
    <physiologicalReaction direction="left-to-right" evidence="1">
        <dbReference type="Rhea" id="RHEA:64721"/>
    </physiologicalReaction>
    <physiologicalReaction direction="right-to-left" evidence="1">
        <dbReference type="Rhea" id="RHEA:64722"/>
    </physiologicalReaction>
</comment>
<comment type="catalytic activity">
    <reaction evidence="3">
        <text>(S)-3-hydroxybutanoate(out) + H(+)(out) = (S)-3-hydroxybutanoate(in) + H(+)(in)</text>
        <dbReference type="Rhea" id="RHEA:71871"/>
        <dbReference type="ChEBI" id="CHEBI:11047"/>
        <dbReference type="ChEBI" id="CHEBI:15378"/>
    </reaction>
</comment>
<comment type="activity regulation">
    <text evidence="1">Transport activity exhibits steep dependence on substrate concentration. Substrate concentration sensitivity of SLC16A7 arises from the strong inter-subunit cooperativity of the SLC16A7 dimer during transport. Inhibited by AR-C155858.</text>
</comment>
<comment type="subunit">
    <text evidence="1 3 6 7">Homodimer (By similarity). Interacts with GRID2IP (PubMed:17496809). Interacts with EMB; interaction mediates SLC16A7 targeting to the plasma membrane (By similarity). Interacts with isoform 2 of BSG (PubMed:21792931).</text>
</comment>
<comment type="subcellular location">
    <subcellularLocation>
        <location evidence="1">Cell membrane</location>
        <topology evidence="1">Multi-pass membrane protein</topology>
    </subcellularLocation>
    <subcellularLocation>
        <location evidence="7">Cytoplasm</location>
    </subcellularLocation>
    <subcellularLocation>
        <location evidence="2">Basolateral cell membrane</location>
        <topology evidence="1">Multi-pass membrane protein</topology>
    </subcellularLocation>
    <text evidence="3 7">Requires the ancillary protein, EMB for plasma membrane localization (By similarity). Colocalizes with BSG in spermatozoa. Detected in the cytoplasm of Sertoli cells (PubMed:21792931).</text>
</comment>
<comment type="tissue specificity">
    <text evidence="7">Detected in testis and in spermatozoa (at protein level).</text>
</comment>
<comment type="similarity">
    <text evidence="8">Belongs to the major facilitator superfamily. Monocarboxylate porter (TC 2.A.1.13) family.</text>
</comment>
<sequence>MPSEPSAPLPQPLPPDGGWGWVVVCASFISIGFSYAFPKAVTVFFKDIQEIFNTTSSQIAWISSIMLAVMYAGGPISSVLVNNYGSRPVVIVGGLLCCIGMILASYSNSVIELYLTVGFIGGLGLAFNLQPALTIIGKYFYRRRPLANGCAMAGSPVFLSTLAPFNQYLFNNYGWKGSFLILGGIFLHSCVAGCLMRPVGPSPNTKKSKSKVGSRHDSTLKKASKVSTAQKVNRFLDFSLFMHRGFLIYLSGNVILFLGIFAPIIFLAQYAKHIGVDDYNSAFLLSVMAFIDMFARPSVGLIANTSLIRPRIQYLFSSAIIFTGICHLLCPLATTYSALVVYVVFFGLGFGSISSLLFECLMDIVGATRFSSAVGLTTIVECCPVLFGPPLAGKLLDITGEYKYLYIASGTVVLVSGTYLLIGNAINYRLLDKERKREKAKKKKSASHASREMEALNRSKQDEVTVKASNAHNPPSDRDKESNI</sequence>
<gene>
    <name type="primary">Slc16a7</name>
    <name type="synonym">Mct2</name>
</gene>
<protein>
    <recommendedName>
        <fullName>Monocarboxylate transporter 2</fullName>
        <shortName>MCT 2</shortName>
    </recommendedName>
    <alternativeName>
        <fullName>Solute carrier family 16 member 7</fullName>
    </alternativeName>
</protein>
<proteinExistence type="evidence at protein level"/>